<dbReference type="EMBL" id="RXNX01012074">
    <property type="status" value="NOT_ANNOTATED_CDS"/>
    <property type="molecule type" value="Genomic_DNA"/>
</dbReference>
<dbReference type="RefSeq" id="XP_032243954.1">
    <property type="nucleotide sequence ID" value="XM_032388063.1"/>
</dbReference>
<dbReference type="SMR" id="P0DTQ6"/>
<dbReference type="GeneID" id="116621997"/>
<dbReference type="GO" id="GO:0042627">
    <property type="term" value="C:chylomicron"/>
    <property type="evidence" value="ECO:0007669"/>
    <property type="project" value="UniProtKB-KW"/>
</dbReference>
<dbReference type="GO" id="GO:0034364">
    <property type="term" value="C:high-density lipoprotein particle"/>
    <property type="evidence" value="ECO:0007669"/>
    <property type="project" value="UniProtKB-KW"/>
</dbReference>
<dbReference type="GO" id="GO:0034362">
    <property type="term" value="C:low-density lipoprotein particle"/>
    <property type="evidence" value="ECO:0007669"/>
    <property type="project" value="UniProtKB-KW"/>
</dbReference>
<dbReference type="GO" id="GO:0034361">
    <property type="term" value="C:very-low-density lipoprotein particle"/>
    <property type="evidence" value="ECO:0007669"/>
    <property type="project" value="UniProtKB-KW"/>
</dbReference>
<dbReference type="GO" id="GO:0016004">
    <property type="term" value="F:phospholipase activator activity"/>
    <property type="evidence" value="ECO:0007669"/>
    <property type="project" value="TreeGrafter"/>
</dbReference>
<dbReference type="GO" id="GO:0043274">
    <property type="term" value="F:phospholipase binding"/>
    <property type="evidence" value="ECO:0007669"/>
    <property type="project" value="TreeGrafter"/>
</dbReference>
<dbReference type="GO" id="GO:0016042">
    <property type="term" value="P:lipid catabolic process"/>
    <property type="evidence" value="ECO:0007669"/>
    <property type="project" value="UniProtKB-KW"/>
</dbReference>
<dbReference type="GO" id="GO:0006869">
    <property type="term" value="P:lipid transport"/>
    <property type="evidence" value="ECO:0007669"/>
    <property type="project" value="UniProtKB-KW"/>
</dbReference>
<dbReference type="GO" id="GO:0060697">
    <property type="term" value="P:positive regulation of phospholipid catabolic process"/>
    <property type="evidence" value="ECO:0007669"/>
    <property type="project" value="TreeGrafter"/>
</dbReference>
<dbReference type="FunFam" id="1.10.1440.10:FF:000001">
    <property type="entry name" value="Apolipoprotein C-II"/>
    <property type="match status" value="1"/>
</dbReference>
<dbReference type="Gene3D" id="1.10.1440.10">
    <property type="entry name" value="Apolipoprotein C-II"/>
    <property type="match status" value="1"/>
</dbReference>
<dbReference type="InterPro" id="IPR008019">
    <property type="entry name" value="Apo-CII"/>
</dbReference>
<dbReference type="InterPro" id="IPR023121">
    <property type="entry name" value="ApoC-II_dom_sf"/>
</dbReference>
<dbReference type="PANTHER" id="PTHR16566">
    <property type="entry name" value="APOLIPOPROTEIN C-II"/>
    <property type="match status" value="1"/>
</dbReference>
<dbReference type="PANTHER" id="PTHR16566:SF0">
    <property type="entry name" value="APOLIPOPROTEIN C-II"/>
    <property type="match status" value="1"/>
</dbReference>
<dbReference type="Pfam" id="PF05355">
    <property type="entry name" value="Apo-CII"/>
    <property type="match status" value="1"/>
</dbReference>
<keyword id="KW-0162">Chylomicron</keyword>
<keyword id="KW-0325">Glycoprotein</keyword>
<keyword id="KW-0345">HDL</keyword>
<keyword id="KW-0427">LDL</keyword>
<keyword id="KW-0442">Lipid degradation</keyword>
<keyword id="KW-0443">Lipid metabolism</keyword>
<keyword id="KW-0445">Lipid transport</keyword>
<keyword id="KW-0449">Lipoprotein</keyword>
<keyword id="KW-0964">Secreted</keyword>
<keyword id="KW-0730">Sialic acid</keyword>
<keyword id="KW-0732">Signal</keyword>
<keyword id="KW-0813">Transport</keyword>
<keyword id="KW-0850">VLDL</keyword>
<sequence length="101" mass="11263">MGIRYLLVLVLVLLVLGCEVQGAHMPQQDEATSSSLFTQLQESLYGYWGTAKAAAQELYEKTYLTTMDEKIREIYNKSTAAVSTYAGIFTDQLLSMLKGDQ</sequence>
<proteinExistence type="inferred from homology"/>
<comment type="function">
    <text evidence="1">Component of chylomicrons, very low-density lipoproteins (VLDL), low-density lipoproteins (LDL), and high-density lipoproteins (HDL) in plasma. Plays an important role in lipoprotein metabolism as an activator of lipoprotein lipase. Both proapolipoprotein C-II and apolipoprotein C-II can activate lipoprotein lipase.</text>
</comment>
<comment type="subcellular location">
    <subcellularLocation>
        <location evidence="1">Secreted</location>
    </subcellularLocation>
</comment>
<comment type="PTM">
    <text evidence="1">Proapolipoprotein C-II is synthesized as a sialic acid containing glycoprotein which is subsequently desialylated prior to its proteolytic processing.</text>
</comment>
<comment type="PTM">
    <text evidence="1">Proapolipoprotein C-II, the major form found in plasma undergoes proteolytic cleavage of its N-terminal hexapeptide to generate apolipoprotein C-II, which occurs as the minor form in plasma.</text>
</comment>
<comment type="similarity">
    <text evidence="3">Belongs to the apolipoprotein C2 family.</text>
</comment>
<gene>
    <name type="primary">APOC2</name>
</gene>
<name>APOC2_PHOVI</name>
<protein>
    <recommendedName>
        <fullName>Apolipoprotein C-II</fullName>
        <shortName>Apo-CII</shortName>
        <shortName>ApoC-II</shortName>
    </recommendedName>
    <alternativeName>
        <fullName>Apolipoprotein C2</fullName>
    </alternativeName>
    <component>
        <recommendedName>
            <fullName>Proapolipoprotein C-II</fullName>
            <shortName>ProapoC-II</shortName>
        </recommendedName>
    </component>
</protein>
<reference key="1">
    <citation type="submission" date="2018-12" db="EMBL/GenBank/DDBJ databases">
        <authorList>
            <person name="Culibrk L."/>
            <person name="Leelakumari S."/>
            <person name="Taylor G.A."/>
            <person name="Tse K."/>
            <person name="Cheng D."/>
            <person name="Chuah E."/>
            <person name="Kirk H."/>
            <person name="Pandoh P."/>
            <person name="Troussard A."/>
            <person name="Zhao Y."/>
            <person name="Mungall A."/>
            <person name="Moore R."/>
            <person name="Akhurst L."/>
            <person name="Marra M.A."/>
            <person name="Haulena M."/>
            <person name="Jones S.J.M."/>
        </authorList>
    </citation>
    <scope>NUCLEOTIDE SEQUENCE [LARGE SCALE GENOMIC DNA]</scope>
</reference>
<reference key="2">
    <citation type="unpublished observations" date="2019-09">
        <authorList>
            <person name="Puppione D.L."/>
        </authorList>
    </citation>
    <scope>IDENTIFICATION</scope>
</reference>
<feature type="signal peptide" evidence="2">
    <location>
        <begin position="1"/>
        <end position="22"/>
    </location>
</feature>
<feature type="chain" id="PRO_0000448502" description="Proapolipoprotein C-II">
    <location>
        <begin position="23"/>
        <end position="101"/>
    </location>
</feature>
<feature type="chain" id="PRO_0000448503" description="Apolipoprotein C-II" evidence="1">
    <location>
        <begin position="29"/>
        <end position="101"/>
    </location>
</feature>
<feature type="region of interest" description="Lipid binding" evidence="1">
    <location>
        <begin position="66"/>
        <end position="74"/>
    </location>
</feature>
<feature type="region of interest" description="Lipoprotein lipase cofactor" evidence="1">
    <location>
        <begin position="78"/>
        <end position="101"/>
    </location>
</feature>
<evidence type="ECO:0000250" key="1">
    <source>
        <dbReference type="UniProtKB" id="P02655"/>
    </source>
</evidence>
<evidence type="ECO:0000255" key="2"/>
<evidence type="ECO:0000305" key="3"/>
<organism>
    <name type="scientific">Phoca vitulina</name>
    <name type="common">Harbor seal</name>
    <dbReference type="NCBI Taxonomy" id="9720"/>
    <lineage>
        <taxon>Eukaryota</taxon>
        <taxon>Metazoa</taxon>
        <taxon>Chordata</taxon>
        <taxon>Craniata</taxon>
        <taxon>Vertebrata</taxon>
        <taxon>Euteleostomi</taxon>
        <taxon>Mammalia</taxon>
        <taxon>Eutheria</taxon>
        <taxon>Laurasiatheria</taxon>
        <taxon>Carnivora</taxon>
        <taxon>Caniformia</taxon>
        <taxon>Pinnipedia</taxon>
        <taxon>Phocidae</taxon>
        <taxon>Phocinae</taxon>
        <taxon>Phoca</taxon>
    </lineage>
</organism>
<accession>P0DTQ6</accession>